<proteinExistence type="evidence at protein level"/>
<sequence length="234" mass="25321">MASEAAQPDAGLWSAGNAFADPPPPYDSLSGRNEGPFVVIDLDTPTDPPPPYSAGPLLSVPIPPTSSGEGEASERGRSRQAAQRAARRARRRAERRAQRRSFGPGGLLATPLFLPETRLVAPPDITRDLLSGLPTYAEAMSDHPPTYATVVAVRSTEQPSGALAPDDQRRTQNSGAWRPPRVNSRELYRAQRAARGSSDHAPYRRQGCCGVVWRHAVFGVVAIVVVIILVFLWR</sequence>
<evidence type="ECO:0000250" key="1">
    <source>
        <dbReference type="UniProtKB" id="P28282"/>
    </source>
</evidence>
<evidence type="ECO:0000255" key="2"/>
<evidence type="ECO:0000256" key="3">
    <source>
        <dbReference type="SAM" id="MobiDB-lite"/>
    </source>
</evidence>
<evidence type="ECO:0000269" key="4">
    <source>
    </source>
</evidence>
<evidence type="ECO:0000305" key="5"/>
<comment type="function">
    <text evidence="1">Plays a role in the transport and release of virions form the host cytoplasm to the extracellular space. Relocalizes host NEDD4, a cytosolic E3 ligase, to cytoplasmic vesicles.</text>
</comment>
<comment type="subunit">
    <text evidence="1 4">Interacts with host ITCH; this interaction induces ubiquitination and probably degradation of ITCH (PubMed:29535361). Interacts with host NEDD4; this interaction increases NEDD4 ubiquitination (By similarity). Interacts with UL11 (By similarity).</text>
</comment>
<comment type="subcellular location">
    <subcellularLocation>
        <location evidence="1">Host Golgi apparatus membrane</location>
        <topology evidence="2">Single-pass membrane protein</topology>
    </subcellularLocation>
</comment>
<comment type="domain">
    <text evidence="4">Late-budding domains (L domains) are short sequence motifs essential for viral particle budding. They recruit proteins of the host ESCRT machinery (Endosomal Sorting Complex Required for Transport) or ESCRT-associated proteins. UL56 contains three L domains: the PPXY motifs which are involved in the interaction with ITCH, a member of the NEDD4 family.</text>
</comment>
<comment type="similarity">
    <text evidence="5">Belongs to the herpesviridae UL56 family.</text>
</comment>
<reference key="1">
    <citation type="journal article" date="1988" name="J. Gen. Virol.">
        <title>The complete DNA sequence of the long unique region in the genome of herpes simplex virus type 1.</title>
        <authorList>
            <person name="McGeoch D.J."/>
            <person name="Dalrymple M.A."/>
            <person name="Davison A.J."/>
            <person name="Dolan A."/>
            <person name="Frame M.C."/>
            <person name="McNab D."/>
            <person name="Perry L.J."/>
            <person name="Scott J.E."/>
            <person name="Taylor P."/>
        </authorList>
    </citation>
    <scope>NUCLEOTIDE SEQUENCE [GENOMIC DNA]</scope>
</reference>
<reference key="2">
    <citation type="journal article" date="1988" name="J. Gen. Virol.">
        <title>The DNA sequences of the long repeat region and adjoining parts of the long unique region in the genome of herpes simplex virus type 1.</title>
        <authorList>
            <person name="Perry L.J."/>
            <person name="McGeoch D.J."/>
        </authorList>
    </citation>
    <scope>NUCLEOTIDE SEQUENCE [GENOMIC DNA]</scope>
</reference>
<reference key="3">
    <citation type="journal article" date="1991" name="J. Gen. Virol.">
        <title>Comparative sequence analysis of the long repeat regions and adjoining parts of the long unique regions in the genomes of herpes simplex viruses types 1 and 2.</title>
        <authorList>
            <person name="McGeoch D.J."/>
            <person name="Cunningham C."/>
            <person name="McIntyre G."/>
            <person name="Dolan A."/>
        </authorList>
    </citation>
    <scope>SEQUENCE REVISION</scope>
</reference>
<reference key="4">
    <citation type="journal article" date="2018" name="Sci. Rep.">
        <title>Herpesviruses possess conserved proteins for interaction with Nedd4 family ubiquitin E3 ligases.</title>
        <authorList>
            <person name="Koshizuka T."/>
            <person name="Kobayashi T."/>
            <person name="Ishioka K."/>
            <person name="Suzutani T."/>
        </authorList>
    </citation>
    <scope>INTERACTION WITH HOST ITCH</scope>
    <scope>DOMAIN</scope>
    <scope>MUTAGENESIS OF TYR-26; TYR-52 AND TYR-147</scope>
</reference>
<organism>
    <name type="scientific">Human herpesvirus 1 (strain 17)</name>
    <name type="common">HHV-1</name>
    <name type="synonym">Human herpes simplex virus 1</name>
    <dbReference type="NCBI Taxonomy" id="10299"/>
    <lineage>
        <taxon>Viruses</taxon>
        <taxon>Duplodnaviria</taxon>
        <taxon>Heunggongvirae</taxon>
        <taxon>Peploviricota</taxon>
        <taxon>Herviviricetes</taxon>
        <taxon>Herpesvirales</taxon>
        <taxon>Orthoherpesviridae</taxon>
        <taxon>Alphaherpesvirinae</taxon>
        <taxon>Simplexvirus</taxon>
        <taxon>Simplexvirus humanalpha1</taxon>
        <taxon>Human herpesvirus 1</taxon>
    </lineage>
</organism>
<accession>P10240</accession>
<accession>O09801</accession>
<name>UL56_HHV11</name>
<protein>
    <recommendedName>
        <fullName>Protein UL56</fullName>
    </recommendedName>
</protein>
<gene>
    <name type="primary">UL56</name>
</gene>
<organismHost>
    <name type="scientific">Homo sapiens</name>
    <name type="common">Human</name>
    <dbReference type="NCBI Taxonomy" id="9606"/>
</organismHost>
<keyword id="KW-1040">Host Golgi apparatus</keyword>
<keyword id="KW-1043">Host membrane</keyword>
<keyword id="KW-0472">Membrane</keyword>
<keyword id="KW-1185">Reference proteome</keyword>
<keyword id="KW-0812">Transmembrane</keyword>
<keyword id="KW-1133">Transmembrane helix</keyword>
<feature type="chain" id="PRO_0000116123" description="Protein UL56">
    <location>
        <begin position="1"/>
        <end position="234"/>
    </location>
</feature>
<feature type="transmembrane region" description="Helical" evidence="2">
    <location>
        <begin position="211"/>
        <end position="231"/>
    </location>
</feature>
<feature type="region of interest" description="Disordered" evidence="3">
    <location>
        <begin position="1"/>
        <end position="104"/>
    </location>
</feature>
<feature type="region of interest" description="Disordered" evidence="3">
    <location>
        <begin position="158"/>
        <end position="182"/>
    </location>
</feature>
<feature type="short sequence motif" description="PPXY motif" evidence="4">
    <location>
        <begin position="23"/>
        <end position="26"/>
    </location>
</feature>
<feature type="short sequence motif" description="PPXY motif" evidence="4">
    <location>
        <begin position="49"/>
        <end position="52"/>
    </location>
</feature>
<feature type="short sequence motif" description="PPXY motif" evidence="4">
    <location>
        <begin position="144"/>
        <end position="147"/>
    </location>
</feature>
<feature type="compositionally biased region" description="Basic residues" evidence="3">
    <location>
        <begin position="85"/>
        <end position="99"/>
    </location>
</feature>
<feature type="mutagenesis site" description="Complete loss of interaction with host ITCH; when associated with A-52 and A-147." evidence="4">
    <original>Y</original>
    <variation>A</variation>
    <location>
        <position position="26"/>
    </location>
</feature>
<feature type="mutagenesis site" description="Complete loss of interaction with host ITCH; when associated with A-26 and A-147." evidence="4">
    <original>Y</original>
    <variation>A</variation>
    <location>
        <position position="52"/>
    </location>
</feature>
<feature type="mutagenesis site" description="Complete loss of interaction with host ITCH; when associated with A-26 and A-52." evidence="4">
    <original>Y</original>
    <variation>A</variation>
    <location>
        <position position="147"/>
    </location>
</feature>
<dbReference type="EMBL" id="X14112">
    <property type="protein sequence ID" value="CAA32292.1"/>
    <property type="molecule type" value="Genomic_DNA"/>
</dbReference>
<dbReference type="PIR" id="B30090">
    <property type="entry name" value="WMBEY6"/>
</dbReference>
<dbReference type="RefSeq" id="YP_009137132.1">
    <property type="nucleotide sequence ID" value="NC_001806.2"/>
</dbReference>
<dbReference type="SMR" id="P10240"/>
<dbReference type="BioGRID" id="971453">
    <property type="interactions" value="2"/>
</dbReference>
<dbReference type="DNASU" id="2703428"/>
<dbReference type="GeneID" id="2703428"/>
<dbReference type="KEGG" id="vg:2703428"/>
<dbReference type="Proteomes" id="UP000009294">
    <property type="component" value="Segment"/>
</dbReference>
<dbReference type="GO" id="GO:0044178">
    <property type="term" value="C:host cell Golgi membrane"/>
    <property type="evidence" value="ECO:0007669"/>
    <property type="project" value="UniProtKB-SubCell"/>
</dbReference>
<dbReference type="GO" id="GO:0016020">
    <property type="term" value="C:membrane"/>
    <property type="evidence" value="ECO:0007669"/>
    <property type="project" value="UniProtKB-KW"/>
</dbReference>
<dbReference type="InterPro" id="IPR007620">
    <property type="entry name" value="Herpes_UL56"/>
</dbReference>
<dbReference type="Pfam" id="PF04534">
    <property type="entry name" value="Herpes_UL56"/>
    <property type="match status" value="1"/>
</dbReference>